<accession>C4LAY8</accession>
<gene>
    <name evidence="2" type="primary">deoD</name>
    <name type="ordered locus">Tola_2597</name>
</gene>
<dbReference type="EC" id="2.4.2.1" evidence="2"/>
<dbReference type="EMBL" id="CP001616">
    <property type="protein sequence ID" value="ACQ94191.1"/>
    <property type="molecule type" value="Genomic_DNA"/>
</dbReference>
<dbReference type="RefSeq" id="WP_015879640.1">
    <property type="nucleotide sequence ID" value="NC_012691.1"/>
</dbReference>
<dbReference type="SMR" id="C4LAY8"/>
<dbReference type="STRING" id="595494.Tola_2597"/>
<dbReference type="KEGG" id="tau:Tola_2597"/>
<dbReference type="eggNOG" id="COG0813">
    <property type="taxonomic scope" value="Bacteria"/>
</dbReference>
<dbReference type="HOGENOM" id="CLU_068457_2_0_6"/>
<dbReference type="OrthoDB" id="9782889at2"/>
<dbReference type="Proteomes" id="UP000009073">
    <property type="component" value="Chromosome"/>
</dbReference>
<dbReference type="GO" id="GO:0005829">
    <property type="term" value="C:cytosol"/>
    <property type="evidence" value="ECO:0007669"/>
    <property type="project" value="TreeGrafter"/>
</dbReference>
<dbReference type="GO" id="GO:0004731">
    <property type="term" value="F:purine-nucleoside phosphorylase activity"/>
    <property type="evidence" value="ECO:0007669"/>
    <property type="project" value="UniProtKB-UniRule"/>
</dbReference>
<dbReference type="GO" id="GO:0006152">
    <property type="term" value="P:purine nucleoside catabolic process"/>
    <property type="evidence" value="ECO:0007669"/>
    <property type="project" value="TreeGrafter"/>
</dbReference>
<dbReference type="CDD" id="cd09006">
    <property type="entry name" value="PNP_EcPNPI-like"/>
    <property type="match status" value="1"/>
</dbReference>
<dbReference type="FunFam" id="3.40.50.1580:FF:000002">
    <property type="entry name" value="Purine nucleoside phosphorylase DeoD-type"/>
    <property type="match status" value="1"/>
</dbReference>
<dbReference type="Gene3D" id="3.40.50.1580">
    <property type="entry name" value="Nucleoside phosphorylase domain"/>
    <property type="match status" value="1"/>
</dbReference>
<dbReference type="HAMAP" id="MF_01627">
    <property type="entry name" value="Pur_nucleosid_phosp"/>
    <property type="match status" value="1"/>
</dbReference>
<dbReference type="InterPro" id="IPR004402">
    <property type="entry name" value="DeoD-type"/>
</dbReference>
<dbReference type="InterPro" id="IPR018016">
    <property type="entry name" value="Nucleoside_phosphorylase_CS"/>
</dbReference>
<dbReference type="InterPro" id="IPR000845">
    <property type="entry name" value="Nucleoside_phosphorylase_d"/>
</dbReference>
<dbReference type="InterPro" id="IPR035994">
    <property type="entry name" value="Nucleoside_phosphorylase_sf"/>
</dbReference>
<dbReference type="NCBIfam" id="TIGR00107">
    <property type="entry name" value="deoD"/>
    <property type="match status" value="1"/>
</dbReference>
<dbReference type="NCBIfam" id="NF004489">
    <property type="entry name" value="PRK05819.1"/>
    <property type="match status" value="1"/>
</dbReference>
<dbReference type="NCBIfam" id="NF009914">
    <property type="entry name" value="PRK13374.1"/>
    <property type="match status" value="1"/>
</dbReference>
<dbReference type="PANTHER" id="PTHR43691:SF2">
    <property type="entry name" value="PURINE NUCLEOSIDE PHOSPHORYLASE DEOD-TYPE"/>
    <property type="match status" value="1"/>
</dbReference>
<dbReference type="PANTHER" id="PTHR43691">
    <property type="entry name" value="URIDINE PHOSPHORYLASE"/>
    <property type="match status" value="1"/>
</dbReference>
<dbReference type="Pfam" id="PF01048">
    <property type="entry name" value="PNP_UDP_1"/>
    <property type="match status" value="1"/>
</dbReference>
<dbReference type="SUPFAM" id="SSF53167">
    <property type="entry name" value="Purine and uridine phosphorylases"/>
    <property type="match status" value="1"/>
</dbReference>
<dbReference type="PROSITE" id="PS01232">
    <property type="entry name" value="PNP_UDP_1"/>
    <property type="match status" value="1"/>
</dbReference>
<sequence length="236" mass="25658">MATPHINAKDGAFAETVLMPGDPLRAKYIAETYLENAELVTDVRNMFGYTGFYKGQRVSVMGHGMGIPSCSIYTKELITEYGVKNIIRIGSCGAVRPDVKVRDVIIGMGACTDSKVNRMRFKDHDFAAIADFGLLRKAVTAAETLGIPVKVGNLFSADLFYSPDPQMFDVMEKFGILGVEMEAAGIYGVAAEYGANALAICTVSDHIKTGEQTSADERQNTFDDMMKIALDSVLLK</sequence>
<evidence type="ECO:0000250" key="1">
    <source>
        <dbReference type="UniProtKB" id="P50389"/>
    </source>
</evidence>
<evidence type="ECO:0000255" key="2">
    <source>
        <dbReference type="HAMAP-Rule" id="MF_01627"/>
    </source>
</evidence>
<comment type="function">
    <text evidence="2">Catalyzes the reversible phosphorolytic breakdown of the N-glycosidic bond in the beta-(deoxy)ribonucleoside molecules, with the formation of the corresponding free purine bases and pentose-1-phosphate.</text>
</comment>
<comment type="catalytic activity">
    <reaction evidence="2">
        <text>a purine D-ribonucleoside + phosphate = a purine nucleobase + alpha-D-ribose 1-phosphate</text>
        <dbReference type="Rhea" id="RHEA:19805"/>
        <dbReference type="ChEBI" id="CHEBI:26386"/>
        <dbReference type="ChEBI" id="CHEBI:43474"/>
        <dbReference type="ChEBI" id="CHEBI:57720"/>
        <dbReference type="ChEBI" id="CHEBI:142355"/>
        <dbReference type="EC" id="2.4.2.1"/>
    </reaction>
</comment>
<comment type="catalytic activity">
    <reaction evidence="2">
        <text>a purine 2'-deoxy-D-ribonucleoside + phosphate = a purine nucleobase + 2-deoxy-alpha-D-ribose 1-phosphate</text>
        <dbReference type="Rhea" id="RHEA:36431"/>
        <dbReference type="ChEBI" id="CHEBI:26386"/>
        <dbReference type="ChEBI" id="CHEBI:43474"/>
        <dbReference type="ChEBI" id="CHEBI:57259"/>
        <dbReference type="ChEBI" id="CHEBI:142361"/>
        <dbReference type="EC" id="2.4.2.1"/>
    </reaction>
</comment>
<comment type="subunit">
    <text evidence="2">Homohexamer; trimer of homodimers.</text>
</comment>
<comment type="similarity">
    <text evidence="2">Belongs to the PNP/UDP phosphorylase family.</text>
</comment>
<reference key="1">
    <citation type="submission" date="2009-05" db="EMBL/GenBank/DDBJ databases">
        <title>Complete sequence of Tolumonas auensis DSM 9187.</title>
        <authorList>
            <consortium name="US DOE Joint Genome Institute"/>
            <person name="Lucas S."/>
            <person name="Copeland A."/>
            <person name="Lapidus A."/>
            <person name="Glavina del Rio T."/>
            <person name="Tice H."/>
            <person name="Bruce D."/>
            <person name="Goodwin L."/>
            <person name="Pitluck S."/>
            <person name="Chertkov O."/>
            <person name="Brettin T."/>
            <person name="Detter J.C."/>
            <person name="Han C."/>
            <person name="Larimer F."/>
            <person name="Land M."/>
            <person name="Hauser L."/>
            <person name="Kyrpides N."/>
            <person name="Mikhailova N."/>
            <person name="Spring S."/>
            <person name="Beller H."/>
        </authorList>
    </citation>
    <scope>NUCLEOTIDE SEQUENCE [LARGE SCALE GENOMIC DNA]</scope>
    <source>
        <strain>DSM 9187 / NBRC 110442 / TA 4</strain>
    </source>
</reference>
<organism>
    <name type="scientific">Tolumonas auensis (strain DSM 9187 / NBRC 110442 / TA 4)</name>
    <dbReference type="NCBI Taxonomy" id="595494"/>
    <lineage>
        <taxon>Bacteria</taxon>
        <taxon>Pseudomonadati</taxon>
        <taxon>Pseudomonadota</taxon>
        <taxon>Gammaproteobacteria</taxon>
        <taxon>Aeromonadales</taxon>
        <taxon>Aeromonadaceae</taxon>
        <taxon>Tolumonas</taxon>
    </lineage>
</organism>
<proteinExistence type="inferred from homology"/>
<protein>
    <recommendedName>
        <fullName evidence="2">Purine nucleoside phosphorylase DeoD-type</fullName>
        <shortName evidence="2">PNP</shortName>
        <ecNumber evidence="2">2.4.2.1</ecNumber>
    </recommendedName>
</protein>
<name>DEOD_TOLAT</name>
<feature type="chain" id="PRO_1000215755" description="Purine nucleoside phosphorylase DeoD-type">
    <location>
        <begin position="1"/>
        <end position="236"/>
    </location>
</feature>
<feature type="active site" description="Proton donor" evidence="2">
    <location>
        <position position="205"/>
    </location>
</feature>
<feature type="binding site" evidence="1">
    <location>
        <position position="5"/>
    </location>
    <ligand>
        <name>a purine D-ribonucleoside</name>
        <dbReference type="ChEBI" id="CHEBI:142355"/>
        <note>ligand shared between dimeric partners</note>
    </ligand>
</feature>
<feature type="binding site" description="in other chain" evidence="1">
    <location>
        <position position="21"/>
    </location>
    <ligand>
        <name>phosphate</name>
        <dbReference type="ChEBI" id="CHEBI:43474"/>
        <note>ligand shared between dimeric partners</note>
    </ligand>
</feature>
<feature type="binding site" description="in other chain" evidence="1">
    <location>
        <position position="25"/>
    </location>
    <ligand>
        <name>phosphate</name>
        <dbReference type="ChEBI" id="CHEBI:43474"/>
        <note>ligand shared between dimeric partners</note>
    </ligand>
</feature>
<feature type="binding site" evidence="1">
    <location>
        <position position="44"/>
    </location>
    <ligand>
        <name>phosphate</name>
        <dbReference type="ChEBI" id="CHEBI:43474"/>
        <note>ligand shared between dimeric partners</note>
    </ligand>
</feature>
<feature type="binding site" description="in other chain" evidence="1">
    <location>
        <begin position="88"/>
        <end position="91"/>
    </location>
    <ligand>
        <name>phosphate</name>
        <dbReference type="ChEBI" id="CHEBI:43474"/>
        <note>ligand shared between dimeric partners</note>
    </ligand>
</feature>
<feature type="binding site" description="in other chain" evidence="1">
    <location>
        <begin position="180"/>
        <end position="182"/>
    </location>
    <ligand>
        <name>a purine D-ribonucleoside</name>
        <dbReference type="ChEBI" id="CHEBI:142355"/>
        <note>ligand shared between dimeric partners</note>
    </ligand>
</feature>
<feature type="binding site" description="in other chain" evidence="1">
    <location>
        <begin position="204"/>
        <end position="205"/>
    </location>
    <ligand>
        <name>a purine D-ribonucleoside</name>
        <dbReference type="ChEBI" id="CHEBI:142355"/>
        <note>ligand shared between dimeric partners</note>
    </ligand>
</feature>
<feature type="site" description="Important for catalytic activity" evidence="2">
    <location>
        <position position="218"/>
    </location>
</feature>
<keyword id="KW-0328">Glycosyltransferase</keyword>
<keyword id="KW-1185">Reference proteome</keyword>
<keyword id="KW-0808">Transferase</keyword>